<comment type="function">
    <text evidence="1">ATP-dependent serine protease that mediates the selective degradation of misfolded and unassembled polypeptides in the peroxisomal matrix. Necessary for type 2 peroxisome targeting signal (PTS2)-containing protein processing and facilitates peroxisome matrix protein import.</text>
</comment>
<comment type="catalytic activity">
    <reaction evidence="1">
        <text>Hydrolysis of proteins in presence of ATP.</text>
        <dbReference type="EC" id="3.4.21.53"/>
    </reaction>
</comment>
<comment type="subcellular location">
    <subcellularLocation>
        <location evidence="1">Peroxisome matrix</location>
    </subcellularLocation>
</comment>
<comment type="similarity">
    <text evidence="1">Belongs to the peptidase S16 family.</text>
</comment>
<organism>
    <name type="scientific">Xenopus laevis</name>
    <name type="common">African clawed frog</name>
    <dbReference type="NCBI Taxonomy" id="8355"/>
    <lineage>
        <taxon>Eukaryota</taxon>
        <taxon>Metazoa</taxon>
        <taxon>Chordata</taxon>
        <taxon>Craniata</taxon>
        <taxon>Vertebrata</taxon>
        <taxon>Euteleostomi</taxon>
        <taxon>Amphibia</taxon>
        <taxon>Batrachia</taxon>
        <taxon>Anura</taxon>
        <taxon>Pipoidea</taxon>
        <taxon>Pipidae</taxon>
        <taxon>Xenopodinae</taxon>
        <taxon>Xenopus</taxon>
        <taxon>Xenopus</taxon>
    </lineage>
</organism>
<evidence type="ECO:0000255" key="1">
    <source>
        <dbReference type="HAMAP-Rule" id="MF_03121"/>
    </source>
</evidence>
<evidence type="ECO:0000255" key="2">
    <source>
        <dbReference type="PROSITE-ProRule" id="PRU01122"/>
    </source>
</evidence>
<evidence type="ECO:0000255" key="3">
    <source>
        <dbReference type="PROSITE-ProRule" id="PRU01123"/>
    </source>
</evidence>
<evidence type="ECO:0000256" key="4">
    <source>
        <dbReference type="SAM" id="MobiDB-lite"/>
    </source>
</evidence>
<accession>Q2TAF8</accession>
<feature type="chain" id="PRO_0000287645" description="Lon protease homolog 2, peroxisomal">
    <location>
        <begin position="1"/>
        <end position="856"/>
    </location>
</feature>
<feature type="domain" description="Lon N-terminal" evidence="3">
    <location>
        <begin position="13"/>
        <end position="222"/>
    </location>
</feature>
<feature type="domain" description="Lon proteolytic" evidence="2">
    <location>
        <begin position="655"/>
        <end position="841"/>
    </location>
</feature>
<feature type="region of interest" description="Disordered" evidence="4">
    <location>
        <begin position="586"/>
        <end position="614"/>
    </location>
</feature>
<feature type="short sequence motif" description="Microbody targeting signal" evidence="1">
    <location>
        <begin position="854"/>
        <end position="856"/>
    </location>
</feature>
<feature type="compositionally biased region" description="Basic and acidic residues" evidence="4">
    <location>
        <begin position="586"/>
        <end position="608"/>
    </location>
</feature>
<feature type="active site" evidence="1">
    <location>
        <position position="747"/>
    </location>
</feature>
<feature type="active site" evidence="1">
    <location>
        <position position="790"/>
    </location>
</feature>
<feature type="binding site" evidence="1">
    <location>
        <begin position="379"/>
        <end position="386"/>
    </location>
    <ligand>
        <name>ATP</name>
        <dbReference type="ChEBI" id="CHEBI:30616"/>
    </ligand>
</feature>
<reference key="1">
    <citation type="submission" date="2005-12" db="EMBL/GenBank/DDBJ databases">
        <authorList>
            <consortium name="NIH - Xenopus Gene Collection (XGC) project"/>
        </authorList>
    </citation>
    <scope>NUCLEOTIDE SEQUENCE [LARGE SCALE MRNA]</scope>
    <source>
        <tissue>Oocyte</tissue>
    </source>
</reference>
<proteinExistence type="evidence at transcript level"/>
<sequence>MASSGSIQIPRRLPLLLTHEGVLLPGSTMRTSVDTPGNMELVQNRLLRGTSLKSTIIGVVPNTSDPSSDREELPSLHRIGTAALAVQVVGSNWPKPHYTLLVTGLCRFQITEILKERPYPVAEVEQLDRLEQLSSKEEFKEALGDLSEQFYKYAVQLVDMLDNSVPAVAKLKRLLNNLPKELLPDVLTSIIRTTNEEKLQILDAVSLEERFKVTIPLLLRQIEGLKLLQKTRNPKQDDDKRIVAIRPPRKLGNISSKSFSLENTDDDDEDSDDIIILERKIKSSNMPEPALKVCVKEIKRLKKMPQSMPEYALTRNYLELMSELPWSKTTRDRLDIRAARILLDNDHYAMAKLKKRVLEYLAVRQLKNNLKGPILCFVGPPGVGKTSVGRSIAKTLGREFHRIALGGVCDQSDIRGHRRTYVGSMPGRIINGLKIVGVNNPVFLLDEVDKLGKSLQGDPAAALLEVLDPEQNHNFTDHYLNVAFDLSQVLFIATANTTATIPPALLDRMEVLEVPGYSQEEKLEIAHRHLISKQLAQHGLTPEQIQIPQEATLEIITRYTREAGVRSLDRKLGAICRAVAVKVAEGQHREHKSEHLEAPEGEERKESVPEGSKSATINDTADFALPPEMPILIDHHALKDILGPPMYETEVFGRLNQPGVAIGLAWTPLGGEIMFVEASRMDGEGQLTLTGQLGDVMKESAHLAISWLRSNAKKYQLTNASGSFDLLDNTDIHLHFPAGAVTKDGPSAGVAIVTCLASLFSGRLVCSDVAMTGEITLRGLVLPVGGIKDKVLAAHRAGLKRVILPKRNETDLEEIPLNVRQDLEFVLAGSLDEVLNAAFDGGFSLKTTPDLLNSKL</sequence>
<name>LONP2_XENLA</name>
<gene>
    <name type="primary">lonp2</name>
</gene>
<dbReference type="EC" id="3.4.21.53" evidence="1"/>
<dbReference type="EMBL" id="BC110947">
    <property type="protein sequence ID" value="AAI10948.1"/>
    <property type="molecule type" value="mRNA"/>
</dbReference>
<dbReference type="RefSeq" id="NP_001089948.1">
    <property type="nucleotide sequence ID" value="NM_001096479.1"/>
</dbReference>
<dbReference type="SMR" id="Q2TAF8"/>
<dbReference type="DNASU" id="735018"/>
<dbReference type="GeneID" id="735018"/>
<dbReference type="KEGG" id="xla:735018"/>
<dbReference type="AGR" id="Xenbase:XB-GENE-948729"/>
<dbReference type="CTD" id="735018"/>
<dbReference type="Xenbase" id="XB-GENE-948729">
    <property type="gene designation" value="lonp2.L"/>
</dbReference>
<dbReference type="OMA" id="EYFLHQQ"/>
<dbReference type="OrthoDB" id="2411602at2759"/>
<dbReference type="Proteomes" id="UP000186698">
    <property type="component" value="Chromosome 4L"/>
</dbReference>
<dbReference type="Bgee" id="735018">
    <property type="expression patterns" value="Expressed in intestine and 19 other cell types or tissues"/>
</dbReference>
<dbReference type="GO" id="GO:0005782">
    <property type="term" value="C:peroxisomal matrix"/>
    <property type="evidence" value="ECO:0000318"/>
    <property type="project" value="GO_Central"/>
</dbReference>
<dbReference type="GO" id="GO:0005524">
    <property type="term" value="F:ATP binding"/>
    <property type="evidence" value="ECO:0007669"/>
    <property type="project" value="UniProtKB-UniRule"/>
</dbReference>
<dbReference type="GO" id="GO:0016887">
    <property type="term" value="F:ATP hydrolysis activity"/>
    <property type="evidence" value="ECO:0007669"/>
    <property type="project" value="UniProtKB-UniRule"/>
</dbReference>
<dbReference type="GO" id="GO:0004176">
    <property type="term" value="F:ATP-dependent peptidase activity"/>
    <property type="evidence" value="ECO:0007669"/>
    <property type="project" value="UniProtKB-UniRule"/>
</dbReference>
<dbReference type="GO" id="GO:0004252">
    <property type="term" value="F:serine-type endopeptidase activity"/>
    <property type="evidence" value="ECO:0007669"/>
    <property type="project" value="UniProtKB-UniRule"/>
</dbReference>
<dbReference type="GO" id="GO:0016558">
    <property type="term" value="P:protein import into peroxisome matrix"/>
    <property type="evidence" value="ECO:0007669"/>
    <property type="project" value="UniProtKB-UniRule"/>
</dbReference>
<dbReference type="GO" id="GO:0016485">
    <property type="term" value="P:protein processing"/>
    <property type="evidence" value="ECO:0000318"/>
    <property type="project" value="GO_Central"/>
</dbReference>
<dbReference type="GO" id="GO:0006515">
    <property type="term" value="P:protein quality control for misfolded or incompletely synthesized proteins"/>
    <property type="evidence" value="ECO:0007669"/>
    <property type="project" value="UniProtKB-UniRule"/>
</dbReference>
<dbReference type="GO" id="GO:0006625">
    <property type="term" value="P:protein targeting to peroxisome"/>
    <property type="evidence" value="ECO:0000318"/>
    <property type="project" value="GO_Central"/>
</dbReference>
<dbReference type="CDD" id="cd19500">
    <property type="entry name" value="RecA-like_Lon"/>
    <property type="match status" value="1"/>
</dbReference>
<dbReference type="FunFam" id="1.20.5.5270:FF:000003">
    <property type="entry name" value="Lon protease homolog 2, peroxisomal"/>
    <property type="match status" value="1"/>
</dbReference>
<dbReference type="FunFam" id="2.30.130.40:FF:000003">
    <property type="entry name" value="Lon protease homolog 2, peroxisomal"/>
    <property type="match status" value="1"/>
</dbReference>
<dbReference type="FunFam" id="3.30.230.10:FF:000019">
    <property type="entry name" value="Lon protease homolog 2, peroxisomal"/>
    <property type="match status" value="1"/>
</dbReference>
<dbReference type="FunFam" id="3.40.50.300:FF:000382">
    <property type="entry name" value="Lon protease homolog 2, peroxisomal"/>
    <property type="match status" value="1"/>
</dbReference>
<dbReference type="Gene3D" id="1.10.8.60">
    <property type="match status" value="1"/>
</dbReference>
<dbReference type="Gene3D" id="1.20.5.5270">
    <property type="match status" value="1"/>
</dbReference>
<dbReference type="Gene3D" id="3.30.230.10">
    <property type="match status" value="1"/>
</dbReference>
<dbReference type="Gene3D" id="2.30.130.40">
    <property type="entry name" value="LON domain-like"/>
    <property type="match status" value="1"/>
</dbReference>
<dbReference type="Gene3D" id="3.40.50.300">
    <property type="entry name" value="P-loop containing nucleotide triphosphate hydrolases"/>
    <property type="match status" value="1"/>
</dbReference>
<dbReference type="HAMAP" id="MF_03121">
    <property type="entry name" value="lonp2_euk"/>
    <property type="match status" value="1"/>
</dbReference>
<dbReference type="InterPro" id="IPR003593">
    <property type="entry name" value="AAA+_ATPase"/>
</dbReference>
<dbReference type="InterPro" id="IPR003959">
    <property type="entry name" value="ATPase_AAA_core"/>
</dbReference>
<dbReference type="InterPro" id="IPR004815">
    <property type="entry name" value="Lon_bac/euk-typ"/>
</dbReference>
<dbReference type="InterPro" id="IPR054594">
    <property type="entry name" value="Lon_lid"/>
</dbReference>
<dbReference type="InterPro" id="IPR008269">
    <property type="entry name" value="Lon_proteolytic"/>
</dbReference>
<dbReference type="InterPro" id="IPR027065">
    <property type="entry name" value="Lon_Prtase"/>
</dbReference>
<dbReference type="InterPro" id="IPR003111">
    <property type="entry name" value="Lon_prtase_N"/>
</dbReference>
<dbReference type="InterPro" id="IPR046336">
    <property type="entry name" value="Lon_prtase_N_sf"/>
</dbReference>
<dbReference type="InterPro" id="IPR027501">
    <property type="entry name" value="Lonp2_euk"/>
</dbReference>
<dbReference type="InterPro" id="IPR027417">
    <property type="entry name" value="P-loop_NTPase"/>
</dbReference>
<dbReference type="InterPro" id="IPR008268">
    <property type="entry name" value="Peptidase_S16_AS"/>
</dbReference>
<dbReference type="InterPro" id="IPR015947">
    <property type="entry name" value="PUA-like_sf"/>
</dbReference>
<dbReference type="InterPro" id="IPR020568">
    <property type="entry name" value="Ribosomal_Su5_D2-typ_SF"/>
</dbReference>
<dbReference type="InterPro" id="IPR014721">
    <property type="entry name" value="Ribsml_uS5_D2-typ_fold_subgr"/>
</dbReference>
<dbReference type="NCBIfam" id="TIGR00763">
    <property type="entry name" value="lon"/>
    <property type="match status" value="1"/>
</dbReference>
<dbReference type="PANTHER" id="PTHR10046">
    <property type="entry name" value="ATP DEPENDENT LON PROTEASE FAMILY MEMBER"/>
    <property type="match status" value="1"/>
</dbReference>
<dbReference type="Pfam" id="PF00004">
    <property type="entry name" value="AAA"/>
    <property type="match status" value="1"/>
</dbReference>
<dbReference type="Pfam" id="PF05362">
    <property type="entry name" value="Lon_C"/>
    <property type="match status" value="1"/>
</dbReference>
<dbReference type="Pfam" id="PF22667">
    <property type="entry name" value="Lon_lid"/>
    <property type="match status" value="1"/>
</dbReference>
<dbReference type="Pfam" id="PF02190">
    <property type="entry name" value="LON_substr_bdg"/>
    <property type="match status" value="1"/>
</dbReference>
<dbReference type="PIRSF" id="PIRSF001174">
    <property type="entry name" value="Lon_proteas"/>
    <property type="match status" value="1"/>
</dbReference>
<dbReference type="PRINTS" id="PR00830">
    <property type="entry name" value="ENDOLAPTASE"/>
</dbReference>
<dbReference type="SMART" id="SM00382">
    <property type="entry name" value="AAA"/>
    <property type="match status" value="1"/>
</dbReference>
<dbReference type="SMART" id="SM00464">
    <property type="entry name" value="LON"/>
    <property type="match status" value="1"/>
</dbReference>
<dbReference type="SUPFAM" id="SSF52540">
    <property type="entry name" value="P-loop containing nucleoside triphosphate hydrolases"/>
    <property type="match status" value="1"/>
</dbReference>
<dbReference type="SUPFAM" id="SSF88697">
    <property type="entry name" value="PUA domain-like"/>
    <property type="match status" value="1"/>
</dbReference>
<dbReference type="SUPFAM" id="SSF54211">
    <property type="entry name" value="Ribosomal protein S5 domain 2-like"/>
    <property type="match status" value="1"/>
</dbReference>
<dbReference type="PROSITE" id="PS51787">
    <property type="entry name" value="LON_N"/>
    <property type="match status" value="1"/>
</dbReference>
<dbReference type="PROSITE" id="PS51786">
    <property type="entry name" value="LON_PROTEOLYTIC"/>
    <property type="match status" value="1"/>
</dbReference>
<dbReference type="PROSITE" id="PS01046">
    <property type="entry name" value="LON_SER"/>
    <property type="match status" value="1"/>
</dbReference>
<protein>
    <recommendedName>
        <fullName evidence="1">Lon protease homolog 2, peroxisomal</fullName>
        <ecNumber evidence="1">3.4.21.53</ecNumber>
    </recommendedName>
</protein>
<keyword id="KW-0067">ATP-binding</keyword>
<keyword id="KW-0378">Hydrolase</keyword>
<keyword id="KW-0547">Nucleotide-binding</keyword>
<keyword id="KW-0576">Peroxisome</keyword>
<keyword id="KW-0645">Protease</keyword>
<keyword id="KW-1185">Reference proteome</keyword>
<keyword id="KW-0720">Serine protease</keyword>